<keyword id="KW-0456">Lyase</keyword>
<keyword id="KW-0659">Purine metabolism</keyword>
<organism>
    <name type="scientific">Escherichia coli (strain UTI89 / UPEC)</name>
    <dbReference type="NCBI Taxonomy" id="364106"/>
    <lineage>
        <taxon>Bacteria</taxon>
        <taxon>Pseudomonadati</taxon>
        <taxon>Pseudomonadota</taxon>
        <taxon>Gammaproteobacteria</taxon>
        <taxon>Enterobacterales</taxon>
        <taxon>Enterobacteriaceae</taxon>
        <taxon>Escherichia</taxon>
    </lineage>
</organism>
<evidence type="ECO:0000255" key="1">
    <source>
        <dbReference type="HAMAP-Rule" id="MF_00616"/>
    </source>
</evidence>
<comment type="function">
    <text evidence="1">Catalyzes the catabolism of the allantoin degradation intermediate (S)-ureidoglycolate, generating urea and glyoxylate. Involved in the anaerobic utilization of allantoin as sole nitrogen source. Reinforces the induction of genes involved in the degradation of allantoin and glyoxylate by producing glyoxylate.</text>
</comment>
<comment type="catalytic activity">
    <reaction evidence="1">
        <text>(S)-ureidoglycolate = urea + glyoxylate</text>
        <dbReference type="Rhea" id="RHEA:11304"/>
        <dbReference type="ChEBI" id="CHEBI:16199"/>
        <dbReference type="ChEBI" id="CHEBI:36655"/>
        <dbReference type="ChEBI" id="CHEBI:57296"/>
        <dbReference type="EC" id="4.3.2.3"/>
    </reaction>
</comment>
<comment type="cofactor">
    <cofactor evidence="1">
        <name>Ni(2+)</name>
        <dbReference type="ChEBI" id="CHEBI:49786"/>
    </cofactor>
</comment>
<comment type="pathway">
    <text evidence="1">Nitrogen metabolism; (S)-allantoin degradation.</text>
</comment>
<comment type="subunit">
    <text evidence="1">Homodimer.</text>
</comment>
<comment type="similarity">
    <text evidence="1">Belongs to the ureidoglycolate lyase family.</text>
</comment>
<sequence>MKLQVLPLSQEAFSAYGDVIETQKRDFFHINNGLVERYHDLALVEILEQDRTLISINRAQPANLPLTIHELERHPLGTQAFIPMKGEVFVVVVALGDDKPDLSTLRAFITNGEQGVNYHRNVWHHPLFAWQRVTDFLTIDRGGSDNCDVESIPEQELCFA</sequence>
<dbReference type="EC" id="4.3.2.3" evidence="1"/>
<dbReference type="EMBL" id="CP000243">
    <property type="protein sequence ID" value="ABE06035.1"/>
    <property type="molecule type" value="Genomic_DNA"/>
</dbReference>
<dbReference type="RefSeq" id="WP_000776372.1">
    <property type="nucleotide sequence ID" value="NZ_CP064825.1"/>
</dbReference>
<dbReference type="SMR" id="Q1RF29"/>
<dbReference type="KEGG" id="eci:UTI89_C0534"/>
<dbReference type="HOGENOM" id="CLU_070848_1_1_6"/>
<dbReference type="UniPathway" id="UPA00395"/>
<dbReference type="Proteomes" id="UP000001952">
    <property type="component" value="Chromosome"/>
</dbReference>
<dbReference type="GO" id="GO:0004848">
    <property type="term" value="F:ureidoglycolate hydrolase activity"/>
    <property type="evidence" value="ECO:0007669"/>
    <property type="project" value="InterPro"/>
</dbReference>
<dbReference type="GO" id="GO:0050385">
    <property type="term" value="F:ureidoglycolate lyase activity"/>
    <property type="evidence" value="ECO:0007669"/>
    <property type="project" value="UniProtKB-UniRule"/>
</dbReference>
<dbReference type="GO" id="GO:0000256">
    <property type="term" value="P:allantoin catabolic process"/>
    <property type="evidence" value="ECO:0007669"/>
    <property type="project" value="UniProtKB-UniRule"/>
</dbReference>
<dbReference type="GO" id="GO:0006145">
    <property type="term" value="P:purine nucleobase catabolic process"/>
    <property type="evidence" value="ECO:0007669"/>
    <property type="project" value="UniProtKB-UniRule"/>
</dbReference>
<dbReference type="CDD" id="cd20298">
    <property type="entry name" value="cupin_UAH"/>
    <property type="match status" value="1"/>
</dbReference>
<dbReference type="FunFam" id="2.60.120.480:FF:000001">
    <property type="entry name" value="Ureidoglycolate lyase"/>
    <property type="match status" value="1"/>
</dbReference>
<dbReference type="Gene3D" id="2.60.120.480">
    <property type="entry name" value="Ureidoglycolate hydrolase"/>
    <property type="match status" value="1"/>
</dbReference>
<dbReference type="HAMAP" id="MF_00616">
    <property type="entry name" value="Ureidogly_lyase"/>
    <property type="match status" value="1"/>
</dbReference>
<dbReference type="InterPro" id="IPR011051">
    <property type="entry name" value="RmlC_Cupin_sf"/>
</dbReference>
<dbReference type="InterPro" id="IPR047233">
    <property type="entry name" value="UAH_cupin"/>
</dbReference>
<dbReference type="InterPro" id="IPR007247">
    <property type="entry name" value="Ureidogly_lyase"/>
</dbReference>
<dbReference type="InterPro" id="IPR023525">
    <property type="entry name" value="Ureidogly_lyase_bac"/>
</dbReference>
<dbReference type="InterPro" id="IPR024060">
    <property type="entry name" value="Ureidoglycolate_lyase_dom_sf"/>
</dbReference>
<dbReference type="NCBIfam" id="NF002948">
    <property type="entry name" value="PRK03606.1-1"/>
    <property type="match status" value="1"/>
</dbReference>
<dbReference type="NCBIfam" id="NF009932">
    <property type="entry name" value="PRK13395.1"/>
    <property type="match status" value="1"/>
</dbReference>
<dbReference type="PANTHER" id="PTHR21221">
    <property type="entry name" value="UREIDOGLYCOLATE HYDROLASE"/>
    <property type="match status" value="1"/>
</dbReference>
<dbReference type="PANTHER" id="PTHR21221:SF1">
    <property type="entry name" value="UREIDOGLYCOLATE LYASE"/>
    <property type="match status" value="1"/>
</dbReference>
<dbReference type="Pfam" id="PF04115">
    <property type="entry name" value="Ureidogly_lyase"/>
    <property type="match status" value="1"/>
</dbReference>
<dbReference type="PIRSF" id="PIRSF017306">
    <property type="entry name" value="Ureidogly_hydro"/>
    <property type="match status" value="1"/>
</dbReference>
<dbReference type="SUPFAM" id="SSF51182">
    <property type="entry name" value="RmlC-like cupins"/>
    <property type="match status" value="1"/>
</dbReference>
<name>ALLA_ECOUT</name>
<gene>
    <name evidence="1" type="primary">allA</name>
    <name type="ordered locus">UTI89_C0534</name>
</gene>
<protein>
    <recommendedName>
        <fullName evidence="1">Ureidoglycolate lyase</fullName>
        <ecNumber evidence="1">4.3.2.3</ecNumber>
    </recommendedName>
    <alternativeName>
        <fullName evidence="1">Ureidoglycolatase</fullName>
    </alternativeName>
</protein>
<accession>Q1RF29</accession>
<feature type="chain" id="PRO_1000061355" description="Ureidoglycolate lyase">
    <location>
        <begin position="1"/>
        <end position="160"/>
    </location>
</feature>
<proteinExistence type="inferred from homology"/>
<reference key="1">
    <citation type="journal article" date="2006" name="Proc. Natl. Acad. Sci. U.S.A.">
        <title>Identification of genes subject to positive selection in uropathogenic strains of Escherichia coli: a comparative genomics approach.</title>
        <authorList>
            <person name="Chen S.L."/>
            <person name="Hung C.-S."/>
            <person name="Xu J."/>
            <person name="Reigstad C.S."/>
            <person name="Magrini V."/>
            <person name="Sabo A."/>
            <person name="Blasiar D."/>
            <person name="Bieri T."/>
            <person name="Meyer R.R."/>
            <person name="Ozersky P."/>
            <person name="Armstrong J.R."/>
            <person name="Fulton R.S."/>
            <person name="Latreille J.P."/>
            <person name="Spieth J."/>
            <person name="Hooton T.M."/>
            <person name="Mardis E.R."/>
            <person name="Hultgren S.J."/>
            <person name="Gordon J.I."/>
        </authorList>
    </citation>
    <scope>NUCLEOTIDE SEQUENCE [LARGE SCALE GENOMIC DNA]</scope>
    <source>
        <strain>UTI89 / UPEC</strain>
    </source>
</reference>